<organism evidence="13">
    <name type="scientific">Arabidopsis thaliana</name>
    <name type="common">Mouse-ear cress</name>
    <dbReference type="NCBI Taxonomy" id="3702"/>
    <lineage>
        <taxon>Eukaryota</taxon>
        <taxon>Viridiplantae</taxon>
        <taxon>Streptophyta</taxon>
        <taxon>Embryophyta</taxon>
        <taxon>Tracheophyta</taxon>
        <taxon>Spermatophyta</taxon>
        <taxon>Magnoliopsida</taxon>
        <taxon>eudicotyledons</taxon>
        <taxon>Gunneridae</taxon>
        <taxon>Pentapetalae</taxon>
        <taxon>rosids</taxon>
        <taxon>malvids</taxon>
        <taxon>Brassicales</taxon>
        <taxon>Brassicaceae</taxon>
        <taxon>Camelineae</taxon>
        <taxon>Arabidopsis</taxon>
    </lineage>
</organism>
<protein>
    <recommendedName>
        <fullName evidence="9">Protein CROWDED NUCLEI 3</fullName>
    </recommendedName>
    <alternativeName>
        <fullName evidence="8">Protein LITTLE NUCLEI 3</fullName>
    </alternativeName>
</protein>
<gene>
    <name evidence="9" type="primary">CRWN3</name>
    <name evidence="8" type="synonym">LINC3</name>
    <name evidence="11" type="ordered locus">At1g68790</name>
    <name evidence="12" type="ORF">F14K14.10</name>
</gene>
<reference key="1">
    <citation type="journal article" date="2000" name="Nature">
        <title>Sequence and analysis of chromosome 1 of the plant Arabidopsis thaliana.</title>
        <authorList>
            <person name="Theologis A."/>
            <person name="Ecker J.R."/>
            <person name="Palm C.J."/>
            <person name="Federspiel N.A."/>
            <person name="Kaul S."/>
            <person name="White O."/>
            <person name="Alonso J."/>
            <person name="Altafi H."/>
            <person name="Araujo R."/>
            <person name="Bowman C.L."/>
            <person name="Brooks S.Y."/>
            <person name="Buehler E."/>
            <person name="Chan A."/>
            <person name="Chao Q."/>
            <person name="Chen H."/>
            <person name="Cheuk R.F."/>
            <person name="Chin C.W."/>
            <person name="Chung M.K."/>
            <person name="Conn L."/>
            <person name="Conway A.B."/>
            <person name="Conway A.R."/>
            <person name="Creasy T.H."/>
            <person name="Dewar K."/>
            <person name="Dunn P."/>
            <person name="Etgu P."/>
            <person name="Feldblyum T.V."/>
            <person name="Feng J.-D."/>
            <person name="Fong B."/>
            <person name="Fujii C.Y."/>
            <person name="Gill J.E."/>
            <person name="Goldsmith A.D."/>
            <person name="Haas B."/>
            <person name="Hansen N.F."/>
            <person name="Hughes B."/>
            <person name="Huizar L."/>
            <person name="Hunter J.L."/>
            <person name="Jenkins J."/>
            <person name="Johnson-Hopson C."/>
            <person name="Khan S."/>
            <person name="Khaykin E."/>
            <person name="Kim C.J."/>
            <person name="Koo H.L."/>
            <person name="Kremenetskaia I."/>
            <person name="Kurtz D.B."/>
            <person name="Kwan A."/>
            <person name="Lam B."/>
            <person name="Langin-Hooper S."/>
            <person name="Lee A."/>
            <person name="Lee J.M."/>
            <person name="Lenz C.A."/>
            <person name="Li J.H."/>
            <person name="Li Y.-P."/>
            <person name="Lin X."/>
            <person name="Liu S.X."/>
            <person name="Liu Z.A."/>
            <person name="Luros J.S."/>
            <person name="Maiti R."/>
            <person name="Marziali A."/>
            <person name="Militscher J."/>
            <person name="Miranda M."/>
            <person name="Nguyen M."/>
            <person name="Nierman W.C."/>
            <person name="Osborne B.I."/>
            <person name="Pai G."/>
            <person name="Peterson J."/>
            <person name="Pham P.K."/>
            <person name="Rizzo M."/>
            <person name="Rooney T."/>
            <person name="Rowley D."/>
            <person name="Sakano H."/>
            <person name="Salzberg S.L."/>
            <person name="Schwartz J.R."/>
            <person name="Shinn P."/>
            <person name="Southwick A.M."/>
            <person name="Sun H."/>
            <person name="Tallon L.J."/>
            <person name="Tambunga G."/>
            <person name="Toriumi M.J."/>
            <person name="Town C.D."/>
            <person name="Utterback T."/>
            <person name="Van Aken S."/>
            <person name="Vaysberg M."/>
            <person name="Vysotskaia V.S."/>
            <person name="Walker M."/>
            <person name="Wu D."/>
            <person name="Yu G."/>
            <person name="Fraser C.M."/>
            <person name="Venter J.C."/>
            <person name="Davis R.W."/>
        </authorList>
    </citation>
    <scope>NUCLEOTIDE SEQUENCE [LARGE SCALE GENOMIC DNA]</scope>
    <source>
        <strain>cv. Columbia</strain>
    </source>
</reference>
<reference key="2">
    <citation type="journal article" date="2017" name="Plant J.">
        <title>Araport11: a complete reannotation of the Arabidopsis thaliana reference genome.</title>
        <authorList>
            <person name="Cheng C.Y."/>
            <person name="Krishnakumar V."/>
            <person name="Chan A.P."/>
            <person name="Thibaud-Nissen F."/>
            <person name="Schobel S."/>
            <person name="Town C.D."/>
        </authorList>
    </citation>
    <scope>GENOME REANNOTATION</scope>
    <source>
        <strain>cv. Columbia</strain>
    </source>
</reference>
<reference key="3">
    <citation type="journal article" date="2003" name="Science">
        <title>Empirical analysis of transcriptional activity in the Arabidopsis genome.</title>
        <authorList>
            <person name="Yamada K."/>
            <person name="Lim J."/>
            <person name="Dale J.M."/>
            <person name="Chen H."/>
            <person name="Shinn P."/>
            <person name="Palm C.J."/>
            <person name="Southwick A.M."/>
            <person name="Wu H.C."/>
            <person name="Kim C.J."/>
            <person name="Nguyen M."/>
            <person name="Pham P.K."/>
            <person name="Cheuk R.F."/>
            <person name="Karlin-Newmann G."/>
            <person name="Liu S.X."/>
            <person name="Lam B."/>
            <person name="Sakano H."/>
            <person name="Wu T."/>
            <person name="Yu G."/>
            <person name="Miranda M."/>
            <person name="Quach H.L."/>
            <person name="Tripp M."/>
            <person name="Chang C.H."/>
            <person name="Lee J.M."/>
            <person name="Toriumi M.J."/>
            <person name="Chan M.M."/>
            <person name="Tang C.C."/>
            <person name="Onodera C.S."/>
            <person name="Deng J.M."/>
            <person name="Akiyama K."/>
            <person name="Ansari Y."/>
            <person name="Arakawa T."/>
            <person name="Banh J."/>
            <person name="Banno F."/>
            <person name="Bowser L."/>
            <person name="Brooks S.Y."/>
            <person name="Carninci P."/>
            <person name="Chao Q."/>
            <person name="Choy N."/>
            <person name="Enju A."/>
            <person name="Goldsmith A.D."/>
            <person name="Gurjal M."/>
            <person name="Hansen N.F."/>
            <person name="Hayashizaki Y."/>
            <person name="Johnson-Hopson C."/>
            <person name="Hsuan V.W."/>
            <person name="Iida K."/>
            <person name="Karnes M."/>
            <person name="Khan S."/>
            <person name="Koesema E."/>
            <person name="Ishida J."/>
            <person name="Jiang P.X."/>
            <person name="Jones T."/>
            <person name="Kawai J."/>
            <person name="Kamiya A."/>
            <person name="Meyers C."/>
            <person name="Nakajima M."/>
            <person name="Narusaka M."/>
            <person name="Seki M."/>
            <person name="Sakurai T."/>
            <person name="Satou M."/>
            <person name="Tamse R."/>
            <person name="Vaysberg M."/>
            <person name="Wallender E.K."/>
            <person name="Wong C."/>
            <person name="Yamamura Y."/>
            <person name="Yuan S."/>
            <person name="Shinozaki K."/>
            <person name="Davis R.W."/>
            <person name="Theologis A."/>
            <person name="Ecker J.R."/>
        </authorList>
    </citation>
    <scope>NUCLEOTIDE SEQUENCE [LARGE SCALE MRNA] OF 1-1059</scope>
    <source>
        <strain>cv. Columbia</strain>
    </source>
</reference>
<reference key="4">
    <citation type="journal article" date="2007" name="Mol. Cell. Proteomics">
        <title>Multidimensional protein identification technology (MudPIT) analysis of ubiquitinated proteins in plants.</title>
        <authorList>
            <person name="Maor R."/>
            <person name="Jones A."/>
            <person name="Nuehse T.S."/>
            <person name="Studholme D.J."/>
            <person name="Peck S.C."/>
            <person name="Shirasu K."/>
        </authorList>
    </citation>
    <scope>UBIQUITINATION [LARGE SCALE ANALYSIS] AT LYS-318 AND LYS-661</scope>
    <scope>IDENTIFICATION BY MASS SPECTROMETRY [LARGE SCALE ANALYSIS]</scope>
    <source>
        <strain>cv. Landsberg erecta</strain>
    </source>
</reference>
<reference key="5">
    <citation type="journal article" date="2007" name="Plant Cell">
        <title>LITTLE NUCLEI genes affecting nuclear morphology in Arabidopsis thaliana.</title>
        <authorList>
            <person name="Dittmer T.A."/>
            <person name="Stacey N.J."/>
            <person name="Sugimoto-Shirasu K."/>
            <person name="Richards E.J."/>
        </authorList>
    </citation>
    <scope>GENE FAMILY</scope>
    <scope>NOMENCLATURE</scope>
    <source>
        <strain>cv. Columbia</strain>
    </source>
</reference>
<reference key="6">
    <citation type="journal article" date="2009" name="J. Proteomics">
        <title>Phosphoproteomic analysis of nuclei-enriched fractions from Arabidopsis thaliana.</title>
        <authorList>
            <person name="Jones A.M.E."/>
            <person name="MacLean D."/>
            <person name="Studholme D.J."/>
            <person name="Serna-Sanz A."/>
            <person name="Andreasson E."/>
            <person name="Rathjen J.P."/>
            <person name="Peck S.C."/>
        </authorList>
    </citation>
    <scope>PHOSPHORYLATION [LARGE SCALE ANALYSIS] AT SER-843 AND SER-910</scope>
    <scope>IDENTIFICATION BY MASS SPECTROMETRY [LARGE SCALE ANALYSIS]</scope>
    <source>
        <strain>cv. Columbia</strain>
    </source>
</reference>
<reference key="7">
    <citation type="journal article" date="2009" name="Plant Physiol.">
        <title>Large-scale Arabidopsis phosphoproteome profiling reveals novel chloroplast kinase substrates and phosphorylation networks.</title>
        <authorList>
            <person name="Reiland S."/>
            <person name="Messerli G."/>
            <person name="Baerenfaller K."/>
            <person name="Gerrits B."/>
            <person name="Endler A."/>
            <person name="Grossmann J."/>
            <person name="Gruissem W."/>
            <person name="Baginsky S."/>
        </authorList>
    </citation>
    <scope>PHOSPHORYLATION [LARGE SCALE ANALYSIS] AT SER-910</scope>
    <scope>IDENTIFICATION BY MASS SPECTROMETRY [LARGE SCALE ANALYSIS]</scope>
</reference>
<reference key="8">
    <citation type="journal article" date="2013" name="BMC Plant Biol.">
        <title>Arabidopsis CROWDED NUCLEI (CRWN) proteins are required for nuclear size control and heterochromatin organization.</title>
        <authorList>
            <person name="Wang H."/>
            <person name="Dittmer T.A."/>
            <person name="Richards E.J."/>
        </authorList>
    </citation>
    <scope>FUNCTION</scope>
    <scope>DISRUPTION PHENOTYPE</scope>
    <scope>GENE FAMILY</scope>
    <scope>NOMENCLATURE</scope>
    <source>
        <strain>cv. Columbia</strain>
    </source>
</reference>
<reference key="9">
    <citation type="journal article" date="2013" name="Plant Cell Physiol.">
        <title>LITTLE NUCLEI 1 and 4 regulate nuclear morphology in Arabidopsis thaliana.</title>
        <authorList>
            <person name="Sakamoto Y."/>
            <person name="Takagi S."/>
        </authorList>
    </citation>
    <scope>FUNCTION</scope>
    <scope>DISRUPTION PHENOTYPE</scope>
    <scope>SUBCELLULAR LOCATION</scope>
    <scope>TISSUE SPECIFICITY</scope>
</reference>
<comment type="function">
    <text evidence="2 6 7">Component of SUN-protein-containing multivariate complexes also called LINC complexes which link the nucleoskeleton and cytoskeleton by providing versatile outer nuclear membrane attachment sites for cytoskeletal filaments (By similarity). Required for nucleus structure organization (e.g. size and shape) (PubMed:23396599, PubMed:24308514).</text>
</comment>
<comment type="subunit">
    <text evidence="1">Core component of the LINC complex which is composed of inner nuclear membrane SUN domain-containing proteins coupled to outer nuclear membrane WIP proteins, the nucleoskeletal CRWN/LINC proteins, and, possibly, KAKU4.</text>
</comment>
<comment type="subcellular location">
    <subcellularLocation>
        <location evidence="1">Nucleus membrane</location>
        <topology evidence="1">Peripheral membrane protein</topology>
    </subcellularLocation>
    <subcellularLocation>
        <location evidence="6">Nucleus</location>
        <location evidence="6">Nucleoplasm</location>
    </subcellularLocation>
    <subcellularLocation>
        <location evidence="6">Cytoplasm</location>
    </subcellularLocation>
    <subcellularLocation>
        <location evidence="1">Nucleus lamina</location>
    </subcellularLocation>
    <text evidence="1 6">Recruited to the nucleus envelope (NE) by SUN proteins and is immobilised therein (By similarity). Punctate or bundle-like structures are detected, especially in trichomes where bundle-shape localization pattern along the long axis of the nucleus is observed. During prometaphase to anaphase, localized diffusely in the cytoplasm. Later transferred from the cytoplasm to the chromatin surface, preferentially assembling to the distal surface of the chromatin. Relocalized to the nuclear periphery during late telophase (PubMed:23396599).</text>
</comment>
<comment type="tissue specificity">
    <text evidence="6">Expressed at low levels in roots, leaves, flowers and flower stalks.</text>
</comment>
<comment type="disruption phenotype">
    <text evidence="6 7">Altered nuclear morphology. Plants lacking both CRWN1 and CRWN3 exhibit markedly smaller rosettes. Plants lacking CRWN1, CRWN3 and CRWN4 are extremely stunted and set few seed.</text>
</comment>
<comment type="similarity">
    <text evidence="10">Belongs to the CRWN family.</text>
</comment>
<proteinExistence type="evidence at protein level"/>
<dbReference type="EMBL" id="AC011914">
    <property type="protein sequence ID" value="AAG52034.1"/>
    <property type="molecule type" value="Genomic_DNA"/>
</dbReference>
<dbReference type="EMBL" id="CP002684">
    <property type="protein sequence ID" value="AEE34839.1"/>
    <property type="molecule type" value="Genomic_DNA"/>
</dbReference>
<dbReference type="EMBL" id="AY072196">
    <property type="status" value="NOT_ANNOTATED_CDS"/>
    <property type="molecule type" value="mRNA"/>
</dbReference>
<dbReference type="PIR" id="F96712">
    <property type="entry name" value="F96712"/>
</dbReference>
<dbReference type="RefSeq" id="NP_177046.1">
    <property type="nucleotide sequence ID" value="NM_105552.3"/>
</dbReference>
<dbReference type="SMR" id="Q9CA42"/>
<dbReference type="FunCoup" id="Q9CA42">
    <property type="interactions" value="245"/>
</dbReference>
<dbReference type="IntAct" id="Q9CA42">
    <property type="interactions" value="2"/>
</dbReference>
<dbReference type="STRING" id="3702.Q9CA42"/>
<dbReference type="iPTMnet" id="Q9CA42"/>
<dbReference type="PaxDb" id="3702-AT1G68790.1"/>
<dbReference type="ProteomicsDB" id="224502"/>
<dbReference type="EnsemblPlants" id="AT1G68790.1">
    <property type="protein sequence ID" value="AT1G68790.1"/>
    <property type="gene ID" value="AT1G68790"/>
</dbReference>
<dbReference type="GeneID" id="843210"/>
<dbReference type="Gramene" id="AT1G68790.1">
    <property type="protein sequence ID" value="AT1G68790.1"/>
    <property type="gene ID" value="AT1G68790"/>
</dbReference>
<dbReference type="KEGG" id="ath:AT1G68790"/>
<dbReference type="Araport" id="AT1G68790"/>
<dbReference type="TAIR" id="AT1G68790">
    <property type="gene designation" value="LINC3"/>
</dbReference>
<dbReference type="eggNOG" id="ENOG502QUGA">
    <property type="taxonomic scope" value="Eukaryota"/>
</dbReference>
<dbReference type="HOGENOM" id="CLU_004241_0_0_1"/>
<dbReference type="InParanoid" id="Q9CA42"/>
<dbReference type="OMA" id="NLERWHD"/>
<dbReference type="OrthoDB" id="673795at2759"/>
<dbReference type="PhylomeDB" id="Q9CA42"/>
<dbReference type="CD-CODE" id="4299E36E">
    <property type="entry name" value="Nucleolus"/>
</dbReference>
<dbReference type="PRO" id="PR:Q9CA42"/>
<dbReference type="Proteomes" id="UP000006548">
    <property type="component" value="Chromosome 1"/>
</dbReference>
<dbReference type="ExpressionAtlas" id="Q9CA42">
    <property type="expression patterns" value="baseline and differential"/>
</dbReference>
<dbReference type="GO" id="GO:0005737">
    <property type="term" value="C:cytoplasm"/>
    <property type="evidence" value="ECO:0000314"/>
    <property type="project" value="UniProtKB"/>
</dbReference>
<dbReference type="GO" id="GO:0005652">
    <property type="term" value="C:nuclear lamina"/>
    <property type="evidence" value="ECO:0007669"/>
    <property type="project" value="UniProtKB-SubCell"/>
</dbReference>
<dbReference type="GO" id="GO:0031965">
    <property type="term" value="C:nuclear membrane"/>
    <property type="evidence" value="ECO:0007669"/>
    <property type="project" value="UniProtKB-SubCell"/>
</dbReference>
<dbReference type="GO" id="GO:0005730">
    <property type="term" value="C:nucleolus"/>
    <property type="evidence" value="ECO:0007005"/>
    <property type="project" value="TAIR"/>
</dbReference>
<dbReference type="GO" id="GO:0005654">
    <property type="term" value="C:nucleoplasm"/>
    <property type="evidence" value="ECO:0000314"/>
    <property type="project" value="TAIR"/>
</dbReference>
<dbReference type="GO" id="GO:0009506">
    <property type="term" value="C:plasmodesma"/>
    <property type="evidence" value="ECO:0007005"/>
    <property type="project" value="TAIR"/>
</dbReference>
<dbReference type="GO" id="GO:0006997">
    <property type="term" value="P:nucleus organization"/>
    <property type="evidence" value="ECO:0000315"/>
    <property type="project" value="UniProtKB"/>
</dbReference>
<dbReference type="InterPro" id="IPR040418">
    <property type="entry name" value="CRWN"/>
</dbReference>
<dbReference type="PANTHER" id="PTHR31908:SF9">
    <property type="entry name" value="PROTEIN CROWDED NUCLEI 3"/>
    <property type="match status" value="1"/>
</dbReference>
<dbReference type="PANTHER" id="PTHR31908">
    <property type="entry name" value="PROTEIN CROWDED NUCLEI 4"/>
    <property type="match status" value="1"/>
</dbReference>
<accession>Q9CA42</accession>
<keyword id="KW-0175">Coiled coil</keyword>
<keyword id="KW-0963">Cytoplasm</keyword>
<keyword id="KW-1017">Isopeptide bond</keyword>
<keyword id="KW-0472">Membrane</keyword>
<keyword id="KW-0539">Nucleus</keyword>
<keyword id="KW-0597">Phosphoprotein</keyword>
<keyword id="KW-1185">Reference proteome</keyword>
<keyword id="KW-0832">Ubl conjugation</keyword>
<feature type="chain" id="PRO_0000432821" description="Protein CROWDED NUCLEI 3">
    <location>
        <begin position="1"/>
        <end position="1085"/>
    </location>
</feature>
<feature type="region of interest" description="Disordered" evidence="5">
    <location>
        <begin position="801"/>
        <end position="997"/>
    </location>
</feature>
<feature type="region of interest" description="Disordered" evidence="5">
    <location>
        <begin position="1020"/>
        <end position="1077"/>
    </location>
</feature>
<feature type="coiled-coil region" evidence="3">
    <location>
        <begin position="51"/>
        <end position="149"/>
    </location>
</feature>
<feature type="coiled-coil region" evidence="3">
    <location>
        <begin position="185"/>
        <end position="695"/>
    </location>
</feature>
<feature type="short sequence motif" description="Nuclear localization signal" evidence="4">
    <location>
        <begin position="404"/>
        <end position="411"/>
    </location>
</feature>
<feature type="compositionally biased region" description="Basic and acidic residues" evidence="5">
    <location>
        <begin position="813"/>
        <end position="825"/>
    </location>
</feature>
<feature type="compositionally biased region" description="Basic residues" evidence="5">
    <location>
        <begin position="854"/>
        <end position="868"/>
    </location>
</feature>
<feature type="compositionally biased region" description="Basic and acidic residues" evidence="5">
    <location>
        <begin position="877"/>
        <end position="897"/>
    </location>
</feature>
<feature type="compositionally biased region" description="Polar residues" evidence="5">
    <location>
        <begin position="932"/>
        <end position="941"/>
    </location>
</feature>
<feature type="compositionally biased region" description="Basic and acidic residues" evidence="5">
    <location>
        <begin position="949"/>
        <end position="995"/>
    </location>
</feature>
<feature type="compositionally biased region" description="Acidic residues" evidence="5">
    <location>
        <begin position="1045"/>
        <end position="1066"/>
    </location>
</feature>
<feature type="modified residue" description="Phosphoserine" evidence="1">
    <location>
        <position position="764"/>
    </location>
</feature>
<feature type="modified residue" description="Phosphoserine" evidence="1">
    <location>
        <position position="787"/>
    </location>
</feature>
<feature type="modified residue" description="Phosphoserine" evidence="1">
    <location>
        <position position="825"/>
    </location>
</feature>
<feature type="modified residue" description="Phosphoserine" evidence="15">
    <location>
        <position position="843"/>
    </location>
</feature>
<feature type="modified residue" description="Phosphoserine" evidence="15 16">
    <location>
        <position position="910"/>
    </location>
</feature>
<feature type="cross-link" description="Glycyl lysine isopeptide (Lys-Gly) (interchain with G-Cter in ubiquitin)" evidence="14">
    <location>
        <position position="318"/>
    </location>
</feature>
<feature type="cross-link" description="Glycyl lysine isopeptide (Lys-Gly) (interchain with G-Cter in ubiquitin)" evidence="14">
    <location>
        <position position="661"/>
    </location>
</feature>
<name>CRWN3_ARATH</name>
<evidence type="ECO:0000250" key="1">
    <source>
        <dbReference type="UniProtKB" id="F4HRT5"/>
    </source>
</evidence>
<evidence type="ECO:0000250" key="2">
    <source>
        <dbReference type="UniProtKB" id="Q6ZWR6"/>
    </source>
</evidence>
<evidence type="ECO:0000255" key="3"/>
<evidence type="ECO:0000255" key="4">
    <source>
        <dbReference type="PROSITE-ProRule" id="PRU00768"/>
    </source>
</evidence>
<evidence type="ECO:0000256" key="5">
    <source>
        <dbReference type="SAM" id="MobiDB-lite"/>
    </source>
</evidence>
<evidence type="ECO:0000269" key="6">
    <source>
    </source>
</evidence>
<evidence type="ECO:0000269" key="7">
    <source>
    </source>
</evidence>
<evidence type="ECO:0000303" key="8">
    <source>
    </source>
</evidence>
<evidence type="ECO:0000303" key="9">
    <source>
    </source>
</evidence>
<evidence type="ECO:0000305" key="10"/>
<evidence type="ECO:0000312" key="11">
    <source>
        <dbReference type="Araport" id="AT1G68790"/>
    </source>
</evidence>
<evidence type="ECO:0000312" key="12">
    <source>
        <dbReference type="EMBL" id="AAG52034.1"/>
    </source>
</evidence>
<evidence type="ECO:0000312" key="13">
    <source>
        <dbReference type="Proteomes" id="UP000006548"/>
    </source>
</evidence>
<evidence type="ECO:0007744" key="14">
    <source>
    </source>
</evidence>
<evidence type="ECO:0007744" key="15">
    <source>
    </source>
</evidence>
<evidence type="ECO:0007744" key="16">
    <source>
    </source>
</evidence>
<sequence length="1085" mass="127204">MFTPQRNRWPETDRKGKAIAFSDEIITPPPQRVLLREDDDWQKFKEVGLLDEASLERKDRDALIEKILKLEKELFDYQHNMGLLLIEKKQWTSTNNELQQAYDEAMEMLKREKTSNAITLNEADKREENLRKALIDEKQFVAELENDLKYWQREHSVVKSTSEAKLEEANALVIGMKEKALEVDRERAIAEEKFSVMNRKSSELERKLKEVETREKVHQREHLSLVTEREAHEAVFYKQREDLQEWEKKLTLEEDRLSEVKRSINHREERVMENERTIEKKEKILENLQQKISVAKSELTEKEESIKIKLNDISLKEKDFEAMKAKVDIKEKELHEFEENLIEREQMEIGKLLDDQKAVLDSRRREFEMELEQMRRSLDEELEGKKAEIEQLQVEISHKEEKLAKREAALEKKEEGVKKKEKDLDARLKTVKEKEKALKAEEKKLHMENERLLEDKECLRKLKDEIEEIGTETTKQESRIREEHESLRITKEERVEFLRLQSELKQQIDKVKQEEELLLKEREELKQDKERFEKEWEALDKKRANITREQNEVAEENEKLRNLQISEKHRLKREEMTSRDNLKRELDGVKMQKESFEADMEDLEMQKRNLDMEFQRQEEAGERDFNERARTYEKRSQEELDNINYTKKLAQREMEEMQYEKLALEREREQISVRKKLLKEQEAEMHKDITELDVLRSSLKEKRKEFICERERFLVFLEKLKSCSSCGEITENFVLSDLRLPDVEDGDKRFGKQKLKAEEALNISPSAENSKRTSLLGKIASKLLSISPIGKTDKVTDLGITVKLPESSQPDDSLDRVSGEDHEPSATEQSFTDSRIQEGPEGSLQSEMKSDKPRRGRGRGRGRGKSVRGRSQATKAVSRDSKPSDGETPRKRQREQTSRITESEQAAGDSDEGVDSITTGGRRKKRQIAVPVSQTPGQTRYQLRRHRNVGTEEDKAQASKGATEKQERVNDDIRKVPSPKETRTPPEGENRENGKAEVLVETVTHEEIVTVETETVFKVNNTGKNPVEDPQLEVGGSGEIREHGEEDDENISMIEEENEGEEEEETERQGNDASIGKKIWVFFTT</sequence>